<sequence>MEQYKIWVDADACPNPIKEMLFRAAERKSVPLVLVANQMLRVPPSPYISQVRVGSGFDVADQYIVDHVEATHLVITADIPLAAHVIEKGALALNPRGELYTTDNIRQKLTMRDFMEDLRSSGVHTGGPDAFSAADKQAFANSLDKWLVRVKR</sequence>
<organism>
    <name type="scientific">Shewanella sp. (strain MR-7)</name>
    <dbReference type="NCBI Taxonomy" id="60481"/>
    <lineage>
        <taxon>Bacteria</taxon>
        <taxon>Pseudomonadati</taxon>
        <taxon>Pseudomonadota</taxon>
        <taxon>Gammaproteobacteria</taxon>
        <taxon>Alteromonadales</taxon>
        <taxon>Shewanellaceae</taxon>
        <taxon>Shewanella</taxon>
    </lineage>
</organism>
<protein>
    <recommendedName>
        <fullName evidence="1">UPF0178 protein Shewmr7_1635</fullName>
    </recommendedName>
</protein>
<gene>
    <name type="ordered locus">Shewmr7_1635</name>
</gene>
<feature type="chain" id="PRO_1000014447" description="UPF0178 protein Shewmr7_1635">
    <location>
        <begin position="1"/>
        <end position="152"/>
    </location>
</feature>
<accession>Q0HW75</accession>
<reference key="1">
    <citation type="submission" date="2006-08" db="EMBL/GenBank/DDBJ databases">
        <title>Complete sequence of chromosome 1 of Shewanella sp. MR-7.</title>
        <authorList>
            <person name="Copeland A."/>
            <person name="Lucas S."/>
            <person name="Lapidus A."/>
            <person name="Barry K."/>
            <person name="Detter J.C."/>
            <person name="Glavina del Rio T."/>
            <person name="Hammon N."/>
            <person name="Israni S."/>
            <person name="Dalin E."/>
            <person name="Tice H."/>
            <person name="Pitluck S."/>
            <person name="Kiss H."/>
            <person name="Brettin T."/>
            <person name="Bruce D."/>
            <person name="Han C."/>
            <person name="Tapia R."/>
            <person name="Gilna P."/>
            <person name="Schmutz J."/>
            <person name="Larimer F."/>
            <person name="Land M."/>
            <person name="Hauser L."/>
            <person name="Kyrpides N."/>
            <person name="Mikhailova N."/>
            <person name="Nealson K."/>
            <person name="Konstantinidis K."/>
            <person name="Klappenbach J."/>
            <person name="Tiedje J."/>
            <person name="Richardson P."/>
        </authorList>
    </citation>
    <scope>NUCLEOTIDE SEQUENCE [LARGE SCALE GENOMIC DNA]</scope>
    <source>
        <strain>MR-7</strain>
    </source>
</reference>
<evidence type="ECO:0000255" key="1">
    <source>
        <dbReference type="HAMAP-Rule" id="MF_00489"/>
    </source>
</evidence>
<proteinExistence type="inferred from homology"/>
<dbReference type="EMBL" id="CP000444">
    <property type="protein sequence ID" value="ABI42630.1"/>
    <property type="molecule type" value="Genomic_DNA"/>
</dbReference>
<dbReference type="SMR" id="Q0HW75"/>
<dbReference type="KEGG" id="shm:Shewmr7_1635"/>
<dbReference type="HOGENOM" id="CLU_106619_1_0_6"/>
<dbReference type="CDD" id="cd18720">
    <property type="entry name" value="PIN_YqxD-like"/>
    <property type="match status" value="1"/>
</dbReference>
<dbReference type="HAMAP" id="MF_00489">
    <property type="entry name" value="UPF0178"/>
    <property type="match status" value="1"/>
</dbReference>
<dbReference type="InterPro" id="IPR003791">
    <property type="entry name" value="UPF0178"/>
</dbReference>
<dbReference type="NCBIfam" id="NF001095">
    <property type="entry name" value="PRK00124.1"/>
    <property type="match status" value="1"/>
</dbReference>
<dbReference type="PANTHER" id="PTHR35146">
    <property type="entry name" value="UPF0178 PROTEIN YAII"/>
    <property type="match status" value="1"/>
</dbReference>
<dbReference type="PANTHER" id="PTHR35146:SF1">
    <property type="entry name" value="UPF0178 PROTEIN YAII"/>
    <property type="match status" value="1"/>
</dbReference>
<dbReference type="Pfam" id="PF02639">
    <property type="entry name" value="DUF188"/>
    <property type="match status" value="1"/>
</dbReference>
<name>Y1635_SHESR</name>
<comment type="similarity">
    <text evidence="1">Belongs to the UPF0178 family.</text>
</comment>